<protein>
    <recommendedName>
        <fullName evidence="5">Conglutin delta 4</fullName>
    </recommendedName>
    <allergenName evidence="6">Lup an delta-conglutin</allergenName>
</protein>
<name>COND4_LUPAN</name>
<dbReference type="EMBL" id="HQ670421">
    <property type="protein sequence ID" value="AEB33724.1"/>
    <property type="molecule type" value="mRNA"/>
</dbReference>
<dbReference type="EMBL" id="CM007370">
    <property type="protein sequence ID" value="OIW03152.1"/>
    <property type="molecule type" value="Genomic_DNA"/>
</dbReference>
<dbReference type="RefSeq" id="XP_019457475.1">
    <property type="nucleotide sequence ID" value="XM_019601930.1"/>
</dbReference>
<dbReference type="SMR" id="F5B8X1"/>
<dbReference type="EnsemblPlants" id="OIW03152">
    <property type="protein sequence ID" value="OIW03152"/>
    <property type="gene ID" value="TanjilG_11789"/>
</dbReference>
<dbReference type="Gramene" id="OIW03152">
    <property type="protein sequence ID" value="OIW03152"/>
    <property type="gene ID" value="TanjilG_11789"/>
</dbReference>
<dbReference type="KEGG" id="lang:109357874"/>
<dbReference type="Proteomes" id="UP000188354">
    <property type="component" value="Chromosome LG10"/>
</dbReference>
<dbReference type="GO" id="GO:0005783">
    <property type="term" value="C:endoplasmic reticulum"/>
    <property type="evidence" value="ECO:0007669"/>
    <property type="project" value="UniProtKB-SubCell"/>
</dbReference>
<dbReference type="Gene3D" id="1.10.110.10">
    <property type="entry name" value="Plant lipid-transfer and hydrophobic proteins"/>
    <property type="match status" value="1"/>
</dbReference>
<dbReference type="InterPro" id="IPR036312">
    <property type="entry name" value="Bifun_inhib/LTP/seed_sf"/>
</dbReference>
<dbReference type="SUPFAM" id="SSF47699">
    <property type="entry name" value="Bifunctional inhibitor/lipid-transfer protein/seed storage 2S albumin"/>
    <property type="match status" value="1"/>
</dbReference>
<evidence type="ECO:0000250" key="1">
    <source>
        <dbReference type="UniProtKB" id="Q6PSU2"/>
    </source>
</evidence>
<evidence type="ECO:0000250" key="2">
    <source>
        <dbReference type="UniProtKB" id="Q99235"/>
    </source>
</evidence>
<evidence type="ECO:0000255" key="3"/>
<evidence type="ECO:0000269" key="4">
    <source>
    </source>
</evidence>
<evidence type="ECO:0000303" key="5">
    <source>
    </source>
</evidence>
<evidence type="ECO:0000305" key="6"/>
<evidence type="ECO:0000305" key="7">
    <source>
    </source>
</evidence>
<evidence type="ECO:0000312" key="8">
    <source>
        <dbReference type="EMBL" id="OIW03152.1"/>
    </source>
</evidence>
<feature type="signal peptide" evidence="3">
    <location>
        <begin position="1"/>
        <end position="22"/>
    </location>
</feature>
<feature type="chain" id="PRO_0000446153" description="Conglutin delta 4">
    <location>
        <begin position="23"/>
        <end position="96"/>
    </location>
</feature>
<feature type="disulfide bond" evidence="1">
    <location>
        <begin position="29"/>
        <end position="78"/>
    </location>
</feature>
<feature type="disulfide bond" evidence="1">
    <location>
        <begin position="80"/>
        <end position="91"/>
    </location>
</feature>
<comment type="subcellular location">
    <subcellularLocation>
        <location evidence="2">Endoplasmic reticulum</location>
    </subcellularLocation>
</comment>
<comment type="developmental stage">
    <text evidence="4">Accumulates during seed development.</text>
</comment>
<comment type="allergen">
    <text evidence="7">Causes an allergic reaction in human.</text>
</comment>
<comment type="similarity">
    <text evidence="6">Belongs to the 2S seed storage albumins family.</text>
</comment>
<organism>
    <name type="scientific">Lupinus angustifolius</name>
    <name type="common">Narrow-leaved blue lupine</name>
    <dbReference type="NCBI Taxonomy" id="3871"/>
    <lineage>
        <taxon>Eukaryota</taxon>
        <taxon>Viridiplantae</taxon>
        <taxon>Streptophyta</taxon>
        <taxon>Embryophyta</taxon>
        <taxon>Tracheophyta</taxon>
        <taxon>Spermatophyta</taxon>
        <taxon>Magnoliopsida</taxon>
        <taxon>eudicotyledons</taxon>
        <taxon>Gunneridae</taxon>
        <taxon>Pentapetalae</taxon>
        <taxon>rosids</taxon>
        <taxon>fabids</taxon>
        <taxon>Fabales</taxon>
        <taxon>Fabaceae</taxon>
        <taxon>Papilionoideae</taxon>
        <taxon>50 kb inversion clade</taxon>
        <taxon>genistoids sensu lato</taxon>
        <taxon>core genistoids</taxon>
        <taxon>Genisteae</taxon>
        <taxon>Lupinus</taxon>
    </lineage>
</organism>
<accession>F5B8X1</accession>
<gene>
    <name evidence="8" type="ORF">TanjilG_11789</name>
</gene>
<sequence length="96" mass="10734">MARLTILIAFVAALVLVVHTSAFRDEQSCKKQLQHSEKHQEDCFPRIKNVIGRSGSSGKKSEKLGQCCEILSDLSEGCQCRALQPVMEKYCYSEAK</sequence>
<reference key="1">
    <citation type="journal article" date="2011" name="BMC Plant Biol.">
        <title>Identification and characterisation of seed storage protein transcripts from Lupinus angustifolius.</title>
        <authorList>
            <person name="Foley R.C."/>
            <person name="Gao L.-L."/>
            <person name="Spriggs A."/>
            <person name="Soo L.Y.C."/>
            <person name="Goggin D.E."/>
            <person name="Smith P.M.C."/>
            <person name="Atkins C.A."/>
            <person name="Singh K.B."/>
        </authorList>
    </citation>
    <scope>NUCLEOTIDE SEQUENCE [MRNA]</scope>
    <scope>DEVELOPMENTAL STAGE</scope>
    <scope>ALLERGEN</scope>
    <source>
        <strain>cv. Tanjil</strain>
        <tissue>Seed</tissue>
    </source>
</reference>
<reference key="2">
    <citation type="journal article" date="2017" name="Plant Biotechnol. J.">
        <title>A comprehensive draft genome sequence for lupin (Lupinus angustifolius), an emerging health food: insights into plant-microbe interactions and legume evolution.</title>
        <authorList>
            <person name="Hane J.K."/>
            <person name="Ming Y."/>
            <person name="Kamphuis L.G."/>
            <person name="Nelson M.N."/>
            <person name="Garg G."/>
            <person name="Atkins C.A."/>
            <person name="Bayer P.E."/>
            <person name="Bravo A."/>
            <person name="Bringans S."/>
            <person name="Cannon S."/>
            <person name="Edwards D."/>
            <person name="Foley R."/>
            <person name="Gao L.L."/>
            <person name="Harrison M.J."/>
            <person name="Huang W."/>
            <person name="Hurgobin B."/>
            <person name="Li S."/>
            <person name="Liu C.W."/>
            <person name="McGrath A."/>
            <person name="Morahan G."/>
            <person name="Murray J."/>
            <person name="Weller J."/>
            <person name="Jian J."/>
            <person name="Singh K.B."/>
        </authorList>
    </citation>
    <scope>NUCLEOTIDE SEQUENCE [LARGE SCALE GENOMIC DNA]</scope>
    <source>
        <strain>cv. Tanjil</strain>
        <tissue>Seedling</tissue>
    </source>
</reference>
<keyword id="KW-0020">Allergen</keyword>
<keyword id="KW-1015">Disulfide bond</keyword>
<keyword id="KW-0256">Endoplasmic reticulum</keyword>
<keyword id="KW-1185">Reference proteome</keyword>
<keyword id="KW-0732">Signal</keyword>
<proteinExistence type="evidence at transcript level"/>